<dbReference type="EC" id="2.8.4.3" evidence="1"/>
<dbReference type="EMBL" id="BA000004">
    <property type="protein sequence ID" value="BAB06091.1"/>
    <property type="molecule type" value="Genomic_DNA"/>
</dbReference>
<dbReference type="PIR" id="D83946">
    <property type="entry name" value="D83946"/>
</dbReference>
<dbReference type="RefSeq" id="WP_010898526.1">
    <property type="nucleotide sequence ID" value="NC_002570.2"/>
</dbReference>
<dbReference type="SMR" id="Q9KAB7"/>
<dbReference type="STRING" id="272558.gene:10728270"/>
<dbReference type="KEGG" id="bha:BH2372"/>
<dbReference type="eggNOG" id="COG0621">
    <property type="taxonomic scope" value="Bacteria"/>
</dbReference>
<dbReference type="HOGENOM" id="CLU_018697_2_0_9"/>
<dbReference type="OrthoDB" id="9805215at2"/>
<dbReference type="Proteomes" id="UP000001258">
    <property type="component" value="Chromosome"/>
</dbReference>
<dbReference type="GO" id="GO:0005829">
    <property type="term" value="C:cytosol"/>
    <property type="evidence" value="ECO:0007669"/>
    <property type="project" value="TreeGrafter"/>
</dbReference>
<dbReference type="GO" id="GO:0051539">
    <property type="term" value="F:4 iron, 4 sulfur cluster binding"/>
    <property type="evidence" value="ECO:0007669"/>
    <property type="project" value="UniProtKB-UniRule"/>
</dbReference>
<dbReference type="GO" id="GO:0046872">
    <property type="term" value="F:metal ion binding"/>
    <property type="evidence" value="ECO:0007669"/>
    <property type="project" value="UniProtKB-KW"/>
</dbReference>
<dbReference type="GO" id="GO:0035597">
    <property type="term" value="F:N6-isopentenyladenosine methylthiotransferase activity"/>
    <property type="evidence" value="ECO:0007669"/>
    <property type="project" value="TreeGrafter"/>
</dbReference>
<dbReference type="CDD" id="cd01335">
    <property type="entry name" value="Radical_SAM"/>
    <property type="match status" value="1"/>
</dbReference>
<dbReference type="FunFam" id="3.40.50.12160:FF:000006">
    <property type="entry name" value="tRNA-2-methylthio-N(6)-dimethylallyladenosine synthase"/>
    <property type="match status" value="1"/>
</dbReference>
<dbReference type="FunFam" id="3.80.30.20:FF:000001">
    <property type="entry name" value="tRNA-2-methylthio-N(6)-dimethylallyladenosine synthase 2"/>
    <property type="match status" value="1"/>
</dbReference>
<dbReference type="Gene3D" id="3.40.50.12160">
    <property type="entry name" value="Methylthiotransferase, N-terminal domain"/>
    <property type="match status" value="1"/>
</dbReference>
<dbReference type="Gene3D" id="3.80.30.20">
    <property type="entry name" value="tm_1862 like domain"/>
    <property type="match status" value="1"/>
</dbReference>
<dbReference type="HAMAP" id="MF_01864">
    <property type="entry name" value="tRNA_metthiotr_MiaB"/>
    <property type="match status" value="1"/>
</dbReference>
<dbReference type="InterPro" id="IPR006638">
    <property type="entry name" value="Elp3/MiaA/NifB-like_rSAM"/>
</dbReference>
<dbReference type="InterPro" id="IPR005839">
    <property type="entry name" value="Methylthiotransferase"/>
</dbReference>
<dbReference type="InterPro" id="IPR020612">
    <property type="entry name" value="Methylthiotransferase_CS"/>
</dbReference>
<dbReference type="InterPro" id="IPR013848">
    <property type="entry name" value="Methylthiotransferase_N"/>
</dbReference>
<dbReference type="InterPro" id="IPR038135">
    <property type="entry name" value="Methylthiotransferase_N_sf"/>
</dbReference>
<dbReference type="InterPro" id="IPR006463">
    <property type="entry name" value="MiaB_methiolase"/>
</dbReference>
<dbReference type="InterPro" id="IPR007197">
    <property type="entry name" value="rSAM"/>
</dbReference>
<dbReference type="InterPro" id="IPR023404">
    <property type="entry name" value="rSAM_horseshoe"/>
</dbReference>
<dbReference type="InterPro" id="IPR002792">
    <property type="entry name" value="TRAM_dom"/>
</dbReference>
<dbReference type="NCBIfam" id="TIGR01574">
    <property type="entry name" value="miaB-methiolase"/>
    <property type="match status" value="1"/>
</dbReference>
<dbReference type="NCBIfam" id="TIGR00089">
    <property type="entry name" value="MiaB/RimO family radical SAM methylthiotransferase"/>
    <property type="match status" value="1"/>
</dbReference>
<dbReference type="PANTHER" id="PTHR43020">
    <property type="entry name" value="CDK5 REGULATORY SUBUNIT-ASSOCIATED PROTEIN 1"/>
    <property type="match status" value="1"/>
</dbReference>
<dbReference type="PANTHER" id="PTHR43020:SF2">
    <property type="entry name" value="MITOCHONDRIAL TRNA METHYLTHIOTRANSFERASE CDK5RAP1"/>
    <property type="match status" value="1"/>
</dbReference>
<dbReference type="Pfam" id="PF04055">
    <property type="entry name" value="Radical_SAM"/>
    <property type="match status" value="1"/>
</dbReference>
<dbReference type="Pfam" id="PF01938">
    <property type="entry name" value="TRAM"/>
    <property type="match status" value="1"/>
</dbReference>
<dbReference type="Pfam" id="PF00919">
    <property type="entry name" value="UPF0004"/>
    <property type="match status" value="1"/>
</dbReference>
<dbReference type="SFLD" id="SFLDF00273">
    <property type="entry name" value="(dimethylallyl)adenosine_tRNA"/>
    <property type="match status" value="1"/>
</dbReference>
<dbReference type="SFLD" id="SFLDG01082">
    <property type="entry name" value="B12-binding_domain_containing"/>
    <property type="match status" value="1"/>
</dbReference>
<dbReference type="SFLD" id="SFLDG01061">
    <property type="entry name" value="methylthiotransferase"/>
    <property type="match status" value="1"/>
</dbReference>
<dbReference type="SMART" id="SM00729">
    <property type="entry name" value="Elp3"/>
    <property type="match status" value="1"/>
</dbReference>
<dbReference type="SUPFAM" id="SSF102114">
    <property type="entry name" value="Radical SAM enzymes"/>
    <property type="match status" value="1"/>
</dbReference>
<dbReference type="PROSITE" id="PS51449">
    <property type="entry name" value="MTTASE_N"/>
    <property type="match status" value="1"/>
</dbReference>
<dbReference type="PROSITE" id="PS01278">
    <property type="entry name" value="MTTASE_RADICAL"/>
    <property type="match status" value="1"/>
</dbReference>
<dbReference type="PROSITE" id="PS51918">
    <property type="entry name" value="RADICAL_SAM"/>
    <property type="match status" value="1"/>
</dbReference>
<dbReference type="PROSITE" id="PS50926">
    <property type="entry name" value="TRAM"/>
    <property type="match status" value="1"/>
</dbReference>
<proteinExistence type="inferred from homology"/>
<accession>Q9KAB7</accession>
<sequence length="538" mass="61172">MNEEQRLGRNGNTDAVSTKEAGSATKDYSKYFDFSNAKVVSEEDGKKVIKIAGREISIFDQPDYKQGKRRGKEEVKVLRPDDLIPEDMKTIGAGKKFLVRTYGCQMNIHDSENMAGMLKEMGFEATDETTDADVILINTCAIRENAENKVFGEIGNLKQLKREKPELVIGVCGCMSQEEGVVNRIMQKHQHIDMIFGTHNIHRLPHLLRNALFGKEMIIEVWSKEGDIVENMPRAREGKTQAWVNIMYGCDKFCTYCIVPYTRGKERSRRPEDIIQEVRDLARQGYKEITLLGQNVNAYGKDLADLDYGLGDLMDEIRKIDIPRVRFTTSHPRDFDDHLIEVLAKGGNLVEHIHLPVQHGNSEILKLMARKYTREQYVELAQKIKRAIPNASFTTDLIVGFPNETDEQFEDTLSLVREIEFDSAFTYIYSPREGTPAAKMKDNVPMEVKRERLARLNALVNDISAQKNLEYQDKVVEVLVEGESKKDPNILAGRTRTNRLVNFKGPKSVIGDIVYVKVTEAKTWSLNGEMVEMAEVNG</sequence>
<comment type="function">
    <text evidence="1">Catalyzes the methylthiolation of N6-(dimethylallyl)adenosine (i(6)A), leading to the formation of 2-methylthio-N6-(dimethylallyl)adenosine (ms(2)i(6)A) at position 37 in tRNAs that read codons beginning with uridine.</text>
</comment>
<comment type="catalytic activity">
    <reaction evidence="1">
        <text>N(6)-dimethylallyladenosine(37) in tRNA + (sulfur carrier)-SH + AH2 + 2 S-adenosyl-L-methionine = 2-methylsulfanyl-N(6)-dimethylallyladenosine(37) in tRNA + (sulfur carrier)-H + 5'-deoxyadenosine + L-methionine + A + S-adenosyl-L-homocysteine + 2 H(+)</text>
        <dbReference type="Rhea" id="RHEA:37067"/>
        <dbReference type="Rhea" id="RHEA-COMP:10375"/>
        <dbReference type="Rhea" id="RHEA-COMP:10376"/>
        <dbReference type="Rhea" id="RHEA-COMP:14737"/>
        <dbReference type="Rhea" id="RHEA-COMP:14739"/>
        <dbReference type="ChEBI" id="CHEBI:13193"/>
        <dbReference type="ChEBI" id="CHEBI:15378"/>
        <dbReference type="ChEBI" id="CHEBI:17319"/>
        <dbReference type="ChEBI" id="CHEBI:17499"/>
        <dbReference type="ChEBI" id="CHEBI:29917"/>
        <dbReference type="ChEBI" id="CHEBI:57844"/>
        <dbReference type="ChEBI" id="CHEBI:57856"/>
        <dbReference type="ChEBI" id="CHEBI:59789"/>
        <dbReference type="ChEBI" id="CHEBI:64428"/>
        <dbReference type="ChEBI" id="CHEBI:74415"/>
        <dbReference type="ChEBI" id="CHEBI:74417"/>
        <dbReference type="EC" id="2.8.4.3"/>
    </reaction>
</comment>
<comment type="cofactor">
    <cofactor evidence="1">
        <name>[4Fe-4S] cluster</name>
        <dbReference type="ChEBI" id="CHEBI:49883"/>
    </cofactor>
    <text evidence="1">Binds 2 [4Fe-4S] clusters. One cluster is coordinated with 3 cysteines and an exchangeable S-adenosyl-L-methionine.</text>
</comment>
<comment type="subunit">
    <text evidence="1">Monomer.</text>
</comment>
<comment type="subcellular location">
    <subcellularLocation>
        <location evidence="1">Cytoplasm</location>
    </subcellularLocation>
</comment>
<comment type="similarity">
    <text evidence="1">Belongs to the methylthiotransferase family. MiaB subfamily.</text>
</comment>
<reference key="1">
    <citation type="journal article" date="2000" name="Nucleic Acids Res.">
        <title>Complete genome sequence of the alkaliphilic bacterium Bacillus halodurans and genomic sequence comparison with Bacillus subtilis.</title>
        <authorList>
            <person name="Takami H."/>
            <person name="Nakasone K."/>
            <person name="Takaki Y."/>
            <person name="Maeno G."/>
            <person name="Sasaki R."/>
            <person name="Masui N."/>
            <person name="Fuji F."/>
            <person name="Hirama C."/>
            <person name="Nakamura Y."/>
            <person name="Ogasawara N."/>
            <person name="Kuhara S."/>
            <person name="Horikoshi K."/>
        </authorList>
    </citation>
    <scope>NUCLEOTIDE SEQUENCE [LARGE SCALE GENOMIC DNA]</scope>
    <source>
        <strain>ATCC BAA-125 / DSM 18197 / FERM 7344 / JCM 9153 / C-125</strain>
    </source>
</reference>
<name>MIAB_HALH5</name>
<evidence type="ECO:0000255" key="1">
    <source>
        <dbReference type="HAMAP-Rule" id="MF_01864"/>
    </source>
</evidence>
<evidence type="ECO:0000255" key="2">
    <source>
        <dbReference type="PROSITE-ProRule" id="PRU01266"/>
    </source>
</evidence>
<evidence type="ECO:0000256" key="3">
    <source>
        <dbReference type="SAM" id="MobiDB-lite"/>
    </source>
</evidence>
<gene>
    <name evidence="1" type="primary">miaB</name>
    <name type="ordered locus">BH2372</name>
</gene>
<organism>
    <name type="scientific">Halalkalibacterium halodurans (strain ATCC BAA-125 / DSM 18197 / FERM 7344 / JCM 9153 / C-125)</name>
    <name type="common">Bacillus halodurans</name>
    <dbReference type="NCBI Taxonomy" id="272558"/>
    <lineage>
        <taxon>Bacteria</taxon>
        <taxon>Bacillati</taxon>
        <taxon>Bacillota</taxon>
        <taxon>Bacilli</taxon>
        <taxon>Bacillales</taxon>
        <taxon>Bacillaceae</taxon>
        <taxon>Halalkalibacterium (ex Joshi et al. 2022)</taxon>
    </lineage>
</organism>
<keyword id="KW-0004">4Fe-4S</keyword>
<keyword id="KW-0963">Cytoplasm</keyword>
<keyword id="KW-0408">Iron</keyword>
<keyword id="KW-0411">Iron-sulfur</keyword>
<keyword id="KW-0479">Metal-binding</keyword>
<keyword id="KW-1185">Reference proteome</keyword>
<keyword id="KW-0949">S-adenosyl-L-methionine</keyword>
<keyword id="KW-0808">Transferase</keyword>
<keyword id="KW-0819">tRNA processing</keyword>
<protein>
    <recommendedName>
        <fullName evidence="1">tRNA-2-methylthio-N(6)-dimethylallyladenosine synthase</fullName>
        <ecNumber evidence="1">2.8.4.3</ecNumber>
    </recommendedName>
    <alternativeName>
        <fullName evidence="1">(Dimethylallyl)adenosine tRNA methylthiotransferase MiaB</fullName>
    </alternativeName>
    <alternativeName>
        <fullName evidence="1">tRNA-i(6)A37 methylthiotransferase</fullName>
    </alternativeName>
</protein>
<feature type="chain" id="PRO_0000374134" description="tRNA-2-methylthio-N(6)-dimethylallyladenosine synthase">
    <location>
        <begin position="1"/>
        <end position="538"/>
    </location>
</feature>
<feature type="domain" description="MTTase N-terminal" evidence="1">
    <location>
        <begin position="95"/>
        <end position="213"/>
    </location>
</feature>
<feature type="domain" description="Radical SAM core" evidence="2">
    <location>
        <begin position="236"/>
        <end position="466"/>
    </location>
</feature>
<feature type="domain" description="TRAM" evidence="1">
    <location>
        <begin position="469"/>
        <end position="532"/>
    </location>
</feature>
<feature type="region of interest" description="Disordered" evidence="3">
    <location>
        <begin position="1"/>
        <end position="23"/>
    </location>
</feature>
<feature type="binding site" evidence="1">
    <location>
        <position position="104"/>
    </location>
    <ligand>
        <name>[4Fe-4S] cluster</name>
        <dbReference type="ChEBI" id="CHEBI:49883"/>
        <label>1</label>
    </ligand>
</feature>
<feature type="binding site" evidence="1">
    <location>
        <position position="140"/>
    </location>
    <ligand>
        <name>[4Fe-4S] cluster</name>
        <dbReference type="ChEBI" id="CHEBI:49883"/>
        <label>1</label>
    </ligand>
</feature>
<feature type="binding site" evidence="1">
    <location>
        <position position="174"/>
    </location>
    <ligand>
        <name>[4Fe-4S] cluster</name>
        <dbReference type="ChEBI" id="CHEBI:49883"/>
        <label>1</label>
    </ligand>
</feature>
<feature type="binding site" evidence="1">
    <location>
        <position position="250"/>
    </location>
    <ligand>
        <name>[4Fe-4S] cluster</name>
        <dbReference type="ChEBI" id="CHEBI:49883"/>
        <label>2</label>
        <note>4Fe-4S-S-AdoMet</note>
    </ligand>
</feature>
<feature type="binding site" evidence="1">
    <location>
        <position position="254"/>
    </location>
    <ligand>
        <name>[4Fe-4S] cluster</name>
        <dbReference type="ChEBI" id="CHEBI:49883"/>
        <label>2</label>
        <note>4Fe-4S-S-AdoMet</note>
    </ligand>
</feature>
<feature type="binding site" evidence="1">
    <location>
        <position position="257"/>
    </location>
    <ligand>
        <name>[4Fe-4S] cluster</name>
        <dbReference type="ChEBI" id="CHEBI:49883"/>
        <label>2</label>
        <note>4Fe-4S-S-AdoMet</note>
    </ligand>
</feature>